<name>NPY_APLCA</name>
<evidence type="ECO:0000269" key="1">
    <source>
    </source>
</evidence>
<evidence type="ECO:0000305" key="2"/>
<protein>
    <recommendedName>
        <fullName>Pro-neuropeptide Y</fullName>
    </recommendedName>
    <component>
        <recommendedName>
            <fullName>Neuropeptide Y</fullName>
        </recommendedName>
        <alternativeName>
            <fullName>Neuropeptide tyrosine</fullName>
            <shortName>NPY</shortName>
        </alternativeName>
    </component>
    <component>
        <recommendedName>
            <fullName>C-flanking peptide of NPY</fullName>
            <shortName>CPON</shortName>
        </recommendedName>
    </component>
</protein>
<feature type="signal peptide" evidence="1">
    <location>
        <begin position="1"/>
        <end position="21"/>
    </location>
</feature>
<feature type="peptide" id="PRO_0000260455" description="Neuropeptide Y">
    <location>
        <begin position="22"/>
        <end position="61"/>
    </location>
</feature>
<feature type="peptide" id="PRO_0000260456" description="C-flanking peptide of NPY">
    <location>
        <begin position="62"/>
        <end position="92"/>
    </location>
</feature>
<feature type="modified residue" description="Phenylalanine amide" evidence="1">
    <location>
        <position position="61"/>
    </location>
</feature>
<sequence>MQRVILVVLLLSCMAVLSVRADNSEMLAPPPRPEEFTSAQQLRQYLAALNEYYSIMGRPRFGKRGDSFRKREFFRTNGERYPEDAAAWTEFQ</sequence>
<reference key="1">
    <citation type="journal article" date="1992" name="Neuron">
        <title>Identification and molecular cloning of a neuropeptide Y homolog that produces prolonged inhibition in Aplysia neurons.</title>
        <authorList>
            <person name="Rajpara S.M."/>
            <person name="Garcia P.D."/>
            <person name="Roberts R."/>
            <person name="Eliassen J.C."/>
            <person name="Owens D.F."/>
            <person name="Maltby D."/>
            <person name="Myers R.M."/>
            <person name="Mayeri E."/>
        </authorList>
    </citation>
    <scope>NUCLEOTIDE SEQUENCE [MRNA]</scope>
    <scope>PROTEIN SEQUENCE OF 22-61</scope>
    <scope>AMIDATION AT PHE-61</scope>
    <scope>FUNCTION</scope>
    <scope>TISSUE SPECIFICITY</scope>
    <source>
        <tissue>CNS</tissue>
    </source>
</reference>
<gene>
    <name type="primary">NPY</name>
</gene>
<keyword id="KW-0027">Amidation</keyword>
<keyword id="KW-0165">Cleavage on pair of basic residues</keyword>
<keyword id="KW-0903">Direct protein sequencing</keyword>
<keyword id="KW-0527">Neuropeptide</keyword>
<keyword id="KW-0964">Secreted</keyword>
<keyword id="KW-0732">Signal</keyword>
<accession>Q27441</accession>
<organism>
    <name type="scientific">Aplysia californica</name>
    <name type="common">California sea hare</name>
    <dbReference type="NCBI Taxonomy" id="6500"/>
    <lineage>
        <taxon>Eukaryota</taxon>
        <taxon>Metazoa</taxon>
        <taxon>Spiralia</taxon>
        <taxon>Lophotrochozoa</taxon>
        <taxon>Mollusca</taxon>
        <taxon>Gastropoda</taxon>
        <taxon>Heterobranchia</taxon>
        <taxon>Euthyneura</taxon>
        <taxon>Tectipleura</taxon>
        <taxon>Aplysiida</taxon>
        <taxon>Aplysioidea</taxon>
        <taxon>Aplysiidae</taxon>
        <taxon>Aplysia</taxon>
    </lineage>
</organism>
<proteinExistence type="evidence at protein level"/>
<dbReference type="EMBL" id="M98854">
    <property type="protein sequence ID" value="AAA27772.1"/>
    <property type="molecule type" value="mRNA"/>
</dbReference>
<dbReference type="PIR" id="JH0716">
    <property type="entry name" value="JH0716"/>
</dbReference>
<dbReference type="RefSeq" id="NP_001191635.1">
    <property type="nucleotide sequence ID" value="NM_001204706.1"/>
</dbReference>
<dbReference type="SMR" id="Q27441"/>
<dbReference type="EnsemblMetazoa" id="NM_001204706.1">
    <property type="protein sequence ID" value="NP_001191635.1"/>
    <property type="gene ID" value="LOC100533423"/>
</dbReference>
<dbReference type="GeneID" id="100533423"/>
<dbReference type="OrthoDB" id="9972427at2759"/>
<dbReference type="Proteomes" id="UP000694888">
    <property type="component" value="Unplaced"/>
</dbReference>
<dbReference type="GO" id="GO:0005576">
    <property type="term" value="C:extracellular region"/>
    <property type="evidence" value="ECO:0007669"/>
    <property type="project" value="UniProtKB-SubCell"/>
</dbReference>
<dbReference type="GO" id="GO:0005179">
    <property type="term" value="F:hormone activity"/>
    <property type="evidence" value="ECO:0007669"/>
    <property type="project" value="InterPro"/>
</dbReference>
<dbReference type="GO" id="GO:0007218">
    <property type="term" value="P:neuropeptide signaling pathway"/>
    <property type="evidence" value="ECO:0007669"/>
    <property type="project" value="UniProtKB-KW"/>
</dbReference>
<dbReference type="CDD" id="cd00126">
    <property type="entry name" value="PAH"/>
    <property type="match status" value="1"/>
</dbReference>
<dbReference type="InterPro" id="IPR001955">
    <property type="entry name" value="Pancreatic_hormone-like"/>
</dbReference>
<dbReference type="InterPro" id="IPR020392">
    <property type="entry name" value="Pancreatic_hormone-like_CS"/>
</dbReference>
<dbReference type="Pfam" id="PF00159">
    <property type="entry name" value="Hormone_3"/>
    <property type="match status" value="1"/>
</dbReference>
<dbReference type="SMART" id="SM00309">
    <property type="entry name" value="PAH"/>
    <property type="match status" value="1"/>
</dbReference>
<dbReference type="PROSITE" id="PS00265">
    <property type="entry name" value="PANCREATIC_HORMONE_1"/>
    <property type="match status" value="1"/>
</dbReference>
<dbReference type="PROSITE" id="PS50276">
    <property type="entry name" value="PANCREATIC_HORMONE_2"/>
    <property type="match status" value="1"/>
</dbReference>
<comment type="function">
    <text evidence="1">May play a role in the regulation of viscermotor functions during egg laying.</text>
</comment>
<comment type="subcellular location">
    <subcellularLocation>
        <location>Secreted</location>
    </subcellularLocation>
</comment>
<comment type="tissue specificity">
    <text evidence="1">Highly expressed in the abdominal ganglion, to lesser extent in the pleural-pedal ganglion and much lower in the cerebral ganglion.</text>
</comment>
<comment type="similarity">
    <text evidence="2">Belongs to the NPY family.</text>
</comment>